<keyword id="KW-0002">3D-structure</keyword>
<keyword id="KW-0963">Cytoplasm</keyword>
<keyword id="KW-0255">Endonuclease</keyword>
<keyword id="KW-0378">Hydrolase</keyword>
<keyword id="KW-0479">Metal-binding</keyword>
<keyword id="KW-0540">Nuclease</keyword>
<keyword id="KW-1185">Reference proteome</keyword>
<name>PELO_ARCFU</name>
<organism>
    <name type="scientific">Archaeoglobus fulgidus (strain ATCC 49558 / DSM 4304 / JCM 9628 / NBRC 100126 / VC-16)</name>
    <dbReference type="NCBI Taxonomy" id="224325"/>
    <lineage>
        <taxon>Archaea</taxon>
        <taxon>Methanobacteriati</taxon>
        <taxon>Methanobacteriota</taxon>
        <taxon>Archaeoglobi</taxon>
        <taxon>Archaeoglobales</taxon>
        <taxon>Archaeoglobaceae</taxon>
        <taxon>Archaeoglobus</taxon>
    </lineage>
</organism>
<dbReference type="EC" id="3.1.-.-" evidence="1"/>
<dbReference type="EMBL" id="AE000782">
    <property type="protein sequence ID" value="AAB90402.1"/>
    <property type="molecule type" value="Genomic_DNA"/>
</dbReference>
<dbReference type="PIR" id="E69354">
    <property type="entry name" value="E69354"/>
</dbReference>
<dbReference type="RefSeq" id="WP_010878340.1">
    <property type="nucleotide sequence ID" value="NC_000917.1"/>
</dbReference>
<dbReference type="PDB" id="3OBY">
    <property type="method" value="X-ray"/>
    <property type="resolution" value="2.90 A"/>
    <property type="chains" value="A/B=1-344"/>
</dbReference>
<dbReference type="PDBsum" id="3OBY"/>
<dbReference type="SMR" id="O29421"/>
<dbReference type="STRING" id="224325.AF_0837"/>
<dbReference type="PaxDb" id="224325-AF_0837"/>
<dbReference type="DNASU" id="1484056"/>
<dbReference type="EnsemblBacteria" id="AAB90402">
    <property type="protein sequence ID" value="AAB90402"/>
    <property type="gene ID" value="AF_0837"/>
</dbReference>
<dbReference type="GeneID" id="1484056"/>
<dbReference type="KEGG" id="afu:AF_0837"/>
<dbReference type="eggNOG" id="arCOG01741">
    <property type="taxonomic scope" value="Archaea"/>
</dbReference>
<dbReference type="HOGENOM" id="CLU_023334_0_0_2"/>
<dbReference type="OrthoDB" id="31300at2157"/>
<dbReference type="PhylomeDB" id="O29421"/>
<dbReference type="EvolutionaryTrace" id="O29421"/>
<dbReference type="Proteomes" id="UP000002199">
    <property type="component" value="Chromosome"/>
</dbReference>
<dbReference type="GO" id="GO:0005737">
    <property type="term" value="C:cytoplasm"/>
    <property type="evidence" value="ECO:0007669"/>
    <property type="project" value="UniProtKB-SubCell"/>
</dbReference>
<dbReference type="GO" id="GO:0004519">
    <property type="term" value="F:endonuclease activity"/>
    <property type="evidence" value="ECO:0007669"/>
    <property type="project" value="UniProtKB-UniRule"/>
</dbReference>
<dbReference type="GO" id="GO:0046872">
    <property type="term" value="F:metal ion binding"/>
    <property type="evidence" value="ECO:0007669"/>
    <property type="project" value="UniProtKB-UniRule"/>
</dbReference>
<dbReference type="GO" id="GO:0070651">
    <property type="term" value="P:nonfunctional rRNA decay"/>
    <property type="evidence" value="ECO:0007669"/>
    <property type="project" value="TreeGrafter"/>
</dbReference>
<dbReference type="GO" id="GO:0070966">
    <property type="term" value="P:nuclear-transcribed mRNA catabolic process, no-go decay"/>
    <property type="evidence" value="ECO:0007669"/>
    <property type="project" value="InterPro"/>
</dbReference>
<dbReference type="GO" id="GO:0070481">
    <property type="term" value="P:nuclear-transcribed mRNA catabolic process, non-stop decay"/>
    <property type="evidence" value="ECO:0007669"/>
    <property type="project" value="InterPro"/>
</dbReference>
<dbReference type="GO" id="GO:0032790">
    <property type="term" value="P:ribosome disassembly"/>
    <property type="evidence" value="ECO:0007669"/>
    <property type="project" value="TreeGrafter"/>
</dbReference>
<dbReference type="GO" id="GO:0071025">
    <property type="term" value="P:RNA surveillance"/>
    <property type="evidence" value="ECO:0007669"/>
    <property type="project" value="InterPro"/>
</dbReference>
<dbReference type="FunFam" id="2.30.30.870:FF:000002">
    <property type="entry name" value="Protein pelota homolog"/>
    <property type="match status" value="1"/>
</dbReference>
<dbReference type="Gene3D" id="3.30.1330.30">
    <property type="match status" value="1"/>
</dbReference>
<dbReference type="Gene3D" id="3.30.420.60">
    <property type="entry name" value="eRF1 domain 2"/>
    <property type="match status" value="1"/>
</dbReference>
<dbReference type="Gene3D" id="2.30.30.870">
    <property type="entry name" value="Pelota, domain A"/>
    <property type="match status" value="1"/>
</dbReference>
<dbReference type="HAMAP" id="MF_01853">
    <property type="entry name" value="PelO"/>
    <property type="match status" value="1"/>
</dbReference>
<dbReference type="InterPro" id="IPR042226">
    <property type="entry name" value="eFR1_2_sf"/>
</dbReference>
<dbReference type="InterPro" id="IPR005140">
    <property type="entry name" value="eRF1_1_Pelota"/>
</dbReference>
<dbReference type="InterPro" id="IPR005141">
    <property type="entry name" value="eRF1_2"/>
</dbReference>
<dbReference type="InterPro" id="IPR005142">
    <property type="entry name" value="eRF1_3"/>
</dbReference>
<dbReference type="InterPro" id="IPR038069">
    <property type="entry name" value="Pelota/DOM34_N"/>
</dbReference>
<dbReference type="InterPro" id="IPR023521">
    <property type="entry name" value="Pelota_arc"/>
</dbReference>
<dbReference type="InterPro" id="IPR029064">
    <property type="entry name" value="Ribosomal_eL30-like_sf"/>
</dbReference>
<dbReference type="InterPro" id="IPR004405">
    <property type="entry name" value="Transl-rel_pelota"/>
</dbReference>
<dbReference type="NCBIfam" id="TIGR00111">
    <property type="entry name" value="pelota"/>
    <property type="match status" value="1"/>
</dbReference>
<dbReference type="PANTHER" id="PTHR10853">
    <property type="entry name" value="PELOTA"/>
    <property type="match status" value="1"/>
</dbReference>
<dbReference type="PANTHER" id="PTHR10853:SF0">
    <property type="entry name" value="PROTEIN PELOTA HOMOLOG"/>
    <property type="match status" value="1"/>
</dbReference>
<dbReference type="Pfam" id="PF03463">
    <property type="entry name" value="eRF1_1"/>
    <property type="match status" value="1"/>
</dbReference>
<dbReference type="Pfam" id="PF03464">
    <property type="entry name" value="eRF1_2"/>
    <property type="match status" value="1"/>
</dbReference>
<dbReference type="Pfam" id="PF03465">
    <property type="entry name" value="eRF1_3"/>
    <property type="match status" value="1"/>
</dbReference>
<dbReference type="SMART" id="SM01194">
    <property type="entry name" value="eRF1_1"/>
    <property type="match status" value="1"/>
</dbReference>
<dbReference type="SUPFAM" id="SSF159065">
    <property type="entry name" value="Dom34/Pelota N-terminal domain-like"/>
    <property type="match status" value="1"/>
</dbReference>
<dbReference type="SUPFAM" id="SSF55315">
    <property type="entry name" value="L30e-like"/>
    <property type="match status" value="1"/>
</dbReference>
<dbReference type="SUPFAM" id="SSF53137">
    <property type="entry name" value="Translational machinery components"/>
    <property type="match status" value="1"/>
</dbReference>
<comment type="function">
    <text evidence="1">May function in recognizing stalled ribosomes, interact with stem-loop structures in stalled mRNA molecules, and effect endonucleolytic cleavage of the mRNA. May play a role in the release non-functional ribosomes and degradation of damaged mRNAs. Has endoribonuclease activity.</text>
</comment>
<comment type="cofactor">
    <cofactor evidence="1">
        <name>a divalent metal cation</name>
        <dbReference type="ChEBI" id="CHEBI:60240"/>
    </cofactor>
</comment>
<comment type="subunit">
    <text evidence="1">Monomer.</text>
</comment>
<comment type="subcellular location">
    <subcellularLocation>
        <location evidence="1">Cytoplasm</location>
    </subcellularLocation>
</comment>
<comment type="domain">
    <text evidence="1">The N-terminal domain has the RNA-binding Sm fold. It harbors the endoribonuclease activity.</text>
</comment>
<comment type="similarity">
    <text evidence="1">Belongs to the eukaryotic release factor 1 family. Pelota subfamily.</text>
</comment>
<accession>O29421</accession>
<sequence>MQIVEENLRDNEGEIKLIPETLDDLWHLRFIIEKGDVVFATTKRASQSSDKLRSDKEMVTVRLGIEVEKVEFHRFANRLRVSGKIVAGIEESGYHTLNITVGKELSIIKKWKPEQLERLRRAVEDSNRPEIVMLTIEEGYAVAGVLRQWGVEEIFEERMGYGKGMGDSRKEFFGEVAAKLESFDFKYLIVAGPGFAKNDFLDFLKERYPEMAKNAVVVDVSSVGSRGFIEILKRRVVDKIVGEVRLAEEAEYIDRLLEGIAKGERVAYGLDEVREAHNYRAIEVLLVADEFLLEEREKWDVDGLLREVEESGGKVVIMSTEFEPGKRLMSLGGIAALLRFNVKG</sequence>
<feature type="chain" id="PRO_0000361780" description="Protein pelota homolog">
    <location>
        <begin position="1"/>
        <end position="344"/>
    </location>
</feature>
<feature type="strand" evidence="2">
    <location>
        <begin position="2"/>
        <end position="6"/>
    </location>
</feature>
<feature type="strand" evidence="2">
    <location>
        <begin position="12"/>
        <end position="18"/>
    </location>
</feature>
<feature type="helix" evidence="2">
    <location>
        <begin position="22"/>
        <end position="31"/>
    </location>
</feature>
<feature type="strand" evidence="2">
    <location>
        <begin position="37"/>
        <end position="40"/>
    </location>
</feature>
<feature type="strand" evidence="2">
    <location>
        <begin position="63"/>
        <end position="72"/>
    </location>
</feature>
<feature type="strand" evidence="2">
    <location>
        <begin position="74"/>
        <end position="77"/>
    </location>
</feature>
<feature type="strand" evidence="2">
    <location>
        <begin position="79"/>
        <end position="87"/>
    </location>
</feature>
<feature type="strand" evidence="2">
    <location>
        <begin position="94"/>
        <end position="99"/>
    </location>
</feature>
<feature type="strand" evidence="2">
    <location>
        <begin position="105"/>
        <end position="110"/>
    </location>
</feature>
<feature type="helix" evidence="2">
    <location>
        <begin position="113"/>
        <end position="123"/>
    </location>
</feature>
<feature type="strand" evidence="2">
    <location>
        <begin position="131"/>
        <end position="137"/>
    </location>
</feature>
<feature type="strand" evidence="2">
    <location>
        <begin position="140"/>
        <end position="147"/>
    </location>
</feature>
<feature type="strand" evidence="2">
    <location>
        <begin position="150"/>
        <end position="158"/>
    </location>
</feature>
<feature type="helix" evidence="2">
    <location>
        <begin position="172"/>
        <end position="183"/>
    </location>
</feature>
<feature type="strand" evidence="2">
    <location>
        <begin position="186"/>
        <end position="191"/>
    </location>
</feature>
<feature type="helix" evidence="2">
    <location>
        <begin position="196"/>
        <end position="207"/>
    </location>
</feature>
<feature type="helix" evidence="2">
    <location>
        <begin position="209"/>
        <end position="212"/>
    </location>
</feature>
<feature type="strand" evidence="2">
    <location>
        <begin position="215"/>
        <end position="217"/>
    </location>
</feature>
<feature type="helix" evidence="2">
    <location>
        <begin position="224"/>
        <end position="233"/>
    </location>
</feature>
<feature type="helix" evidence="2">
    <location>
        <begin position="236"/>
        <end position="262"/>
    </location>
</feature>
<feature type="strand" evidence="2">
    <location>
        <begin position="265"/>
        <end position="269"/>
    </location>
</feature>
<feature type="helix" evidence="2">
    <location>
        <begin position="270"/>
        <end position="277"/>
    </location>
</feature>
<feature type="turn" evidence="2">
    <location>
        <begin position="278"/>
        <end position="280"/>
    </location>
</feature>
<feature type="strand" evidence="2">
    <location>
        <begin position="282"/>
        <end position="288"/>
    </location>
</feature>
<feature type="helix" evidence="2">
    <location>
        <begin position="289"/>
        <end position="295"/>
    </location>
</feature>
<feature type="turn" evidence="2">
    <location>
        <begin position="296"/>
        <end position="298"/>
    </location>
</feature>
<feature type="helix" evidence="2">
    <location>
        <begin position="301"/>
        <end position="310"/>
    </location>
</feature>
<feature type="strand" evidence="2">
    <location>
        <begin position="314"/>
        <end position="318"/>
    </location>
</feature>
<feature type="helix" evidence="2">
    <location>
        <begin position="323"/>
        <end position="330"/>
    </location>
</feature>
<feature type="strand" evidence="2">
    <location>
        <begin position="333"/>
        <end position="340"/>
    </location>
</feature>
<protein>
    <recommendedName>
        <fullName evidence="1">Protein pelota homolog</fullName>
        <ecNumber evidence="1">3.1.-.-</ecNumber>
    </recommendedName>
</protein>
<proteinExistence type="evidence at protein level"/>
<evidence type="ECO:0000255" key="1">
    <source>
        <dbReference type="HAMAP-Rule" id="MF_01853"/>
    </source>
</evidence>
<evidence type="ECO:0007829" key="2">
    <source>
        <dbReference type="PDB" id="3OBY"/>
    </source>
</evidence>
<reference key="1">
    <citation type="journal article" date="1997" name="Nature">
        <title>The complete genome sequence of the hyperthermophilic, sulphate-reducing archaeon Archaeoglobus fulgidus.</title>
        <authorList>
            <person name="Klenk H.-P."/>
            <person name="Clayton R.A."/>
            <person name="Tomb J.-F."/>
            <person name="White O."/>
            <person name="Nelson K.E."/>
            <person name="Ketchum K.A."/>
            <person name="Dodson R.J."/>
            <person name="Gwinn M.L."/>
            <person name="Hickey E.K."/>
            <person name="Peterson J.D."/>
            <person name="Richardson D.L."/>
            <person name="Kerlavage A.R."/>
            <person name="Graham D.E."/>
            <person name="Kyrpides N.C."/>
            <person name="Fleischmann R.D."/>
            <person name="Quackenbush J."/>
            <person name="Lee N.H."/>
            <person name="Sutton G.G."/>
            <person name="Gill S.R."/>
            <person name="Kirkness E.F."/>
            <person name="Dougherty B.A."/>
            <person name="McKenney K."/>
            <person name="Adams M.D."/>
            <person name="Loftus B.J."/>
            <person name="Peterson S.N."/>
            <person name="Reich C.I."/>
            <person name="McNeil L.K."/>
            <person name="Badger J.H."/>
            <person name="Glodek A."/>
            <person name="Zhou L."/>
            <person name="Overbeek R."/>
            <person name="Gocayne J.D."/>
            <person name="Weidman J.F."/>
            <person name="McDonald L.A."/>
            <person name="Utterback T.R."/>
            <person name="Cotton M.D."/>
            <person name="Spriggs T."/>
            <person name="Artiach P."/>
            <person name="Kaine B.P."/>
            <person name="Sykes S.M."/>
            <person name="Sadow P.W."/>
            <person name="D'Andrea K.P."/>
            <person name="Bowman C."/>
            <person name="Fujii C."/>
            <person name="Garland S.A."/>
            <person name="Mason T.M."/>
            <person name="Olsen G.J."/>
            <person name="Fraser C.M."/>
            <person name="Smith H.O."/>
            <person name="Woese C.R."/>
            <person name="Venter J.C."/>
        </authorList>
    </citation>
    <scope>NUCLEOTIDE SEQUENCE [LARGE SCALE GENOMIC DNA]</scope>
    <source>
        <strain>ATCC 49558 / DSM 4304 / JCM 9628 / NBRC 100126 / VC-16</strain>
    </source>
</reference>
<gene>
    <name evidence="1" type="primary">pelA</name>
    <name type="ordered locus">AF_0837</name>
</gene>